<comment type="function">
    <text evidence="1">Inhibits all the catalytic activities of DNA gyrase by preventing its interaction with DNA. Acts by binding directly to the C-terminal domain of GyrB, which probably disrupts DNA binding by the gyrase.</text>
</comment>
<comment type="cofactor">
    <cofactor evidence="1">
        <name>Zn(2+)</name>
        <dbReference type="ChEBI" id="CHEBI:29105"/>
    </cofactor>
    <text evidence="1">Binds 1 zinc ion.</text>
</comment>
<comment type="subunit">
    <text evidence="1">Interacts with GyrB.</text>
</comment>
<comment type="similarity">
    <text evidence="1">Belongs to the DNA gyrase inhibitor YacG family.</text>
</comment>
<sequence>MSETIVNCPTCNQDVIWKPESKYRPFCSERCQLIDLGEWANEEKRIAAVENDVMTSDLEGHY</sequence>
<gene>
    <name evidence="1" type="primary">yacG</name>
    <name type="ordered locus">APL_0875</name>
</gene>
<name>YACG_ACTP2</name>
<keyword id="KW-0479">Metal-binding</keyword>
<keyword id="KW-1185">Reference proteome</keyword>
<keyword id="KW-0862">Zinc</keyword>
<feature type="chain" id="PRO_1000056965" description="DNA gyrase inhibitor YacG">
    <location>
        <begin position="1"/>
        <end position="62"/>
    </location>
</feature>
<feature type="binding site" evidence="1">
    <location>
        <position position="8"/>
    </location>
    <ligand>
        <name>Zn(2+)</name>
        <dbReference type="ChEBI" id="CHEBI:29105"/>
    </ligand>
</feature>
<feature type="binding site" evidence="1">
    <location>
        <position position="11"/>
    </location>
    <ligand>
        <name>Zn(2+)</name>
        <dbReference type="ChEBI" id="CHEBI:29105"/>
    </ligand>
</feature>
<feature type="binding site" evidence="1">
    <location>
        <position position="27"/>
    </location>
    <ligand>
        <name>Zn(2+)</name>
        <dbReference type="ChEBI" id="CHEBI:29105"/>
    </ligand>
</feature>
<feature type="binding site" evidence="1">
    <location>
        <position position="31"/>
    </location>
    <ligand>
        <name>Zn(2+)</name>
        <dbReference type="ChEBI" id="CHEBI:29105"/>
    </ligand>
</feature>
<proteinExistence type="inferred from homology"/>
<accession>A3N0N5</accession>
<protein>
    <recommendedName>
        <fullName evidence="1">DNA gyrase inhibitor YacG</fullName>
    </recommendedName>
</protein>
<reference key="1">
    <citation type="journal article" date="2008" name="J. Bacteriol.">
        <title>The complete genome sequence of Actinobacillus pleuropneumoniae L20 (serotype 5b).</title>
        <authorList>
            <person name="Foote S.J."/>
            <person name="Bosse J.T."/>
            <person name="Bouevitch A.B."/>
            <person name="Langford P.R."/>
            <person name="Young N.M."/>
            <person name="Nash J.H.E."/>
        </authorList>
    </citation>
    <scope>NUCLEOTIDE SEQUENCE [LARGE SCALE GENOMIC DNA]</scope>
    <source>
        <strain>L20</strain>
    </source>
</reference>
<evidence type="ECO:0000255" key="1">
    <source>
        <dbReference type="HAMAP-Rule" id="MF_00649"/>
    </source>
</evidence>
<organism>
    <name type="scientific">Actinobacillus pleuropneumoniae serotype 5b (strain L20)</name>
    <dbReference type="NCBI Taxonomy" id="416269"/>
    <lineage>
        <taxon>Bacteria</taxon>
        <taxon>Pseudomonadati</taxon>
        <taxon>Pseudomonadota</taxon>
        <taxon>Gammaproteobacteria</taxon>
        <taxon>Pasteurellales</taxon>
        <taxon>Pasteurellaceae</taxon>
        <taxon>Actinobacillus</taxon>
    </lineage>
</organism>
<dbReference type="EMBL" id="CP000569">
    <property type="protein sequence ID" value="ABN73971.1"/>
    <property type="molecule type" value="Genomic_DNA"/>
</dbReference>
<dbReference type="RefSeq" id="WP_005597388.1">
    <property type="nucleotide sequence ID" value="NC_009053.1"/>
</dbReference>
<dbReference type="SMR" id="A3N0N5"/>
<dbReference type="STRING" id="416269.APL_0875"/>
<dbReference type="EnsemblBacteria" id="ABN73971">
    <property type="protein sequence ID" value="ABN73971"/>
    <property type="gene ID" value="APL_0875"/>
</dbReference>
<dbReference type="GeneID" id="48599062"/>
<dbReference type="KEGG" id="apl:APL_0875"/>
<dbReference type="eggNOG" id="COG3024">
    <property type="taxonomic scope" value="Bacteria"/>
</dbReference>
<dbReference type="HOGENOM" id="CLU_178280_3_2_6"/>
<dbReference type="Proteomes" id="UP000001432">
    <property type="component" value="Chromosome"/>
</dbReference>
<dbReference type="GO" id="GO:0008657">
    <property type="term" value="F:DNA topoisomerase type II (double strand cut, ATP-hydrolyzing) inhibitor activity"/>
    <property type="evidence" value="ECO:0007669"/>
    <property type="project" value="UniProtKB-UniRule"/>
</dbReference>
<dbReference type="GO" id="GO:0008270">
    <property type="term" value="F:zinc ion binding"/>
    <property type="evidence" value="ECO:0007669"/>
    <property type="project" value="UniProtKB-UniRule"/>
</dbReference>
<dbReference type="GO" id="GO:0006355">
    <property type="term" value="P:regulation of DNA-templated transcription"/>
    <property type="evidence" value="ECO:0007669"/>
    <property type="project" value="InterPro"/>
</dbReference>
<dbReference type="Gene3D" id="3.30.50.10">
    <property type="entry name" value="Erythroid Transcription Factor GATA-1, subunit A"/>
    <property type="match status" value="1"/>
</dbReference>
<dbReference type="HAMAP" id="MF_00649">
    <property type="entry name" value="DNA_gyrase_inhibitor_YacG"/>
    <property type="match status" value="1"/>
</dbReference>
<dbReference type="InterPro" id="IPR005584">
    <property type="entry name" value="DNA_gyrase_inhibitor_YacG"/>
</dbReference>
<dbReference type="InterPro" id="IPR013088">
    <property type="entry name" value="Znf_NHR/GATA"/>
</dbReference>
<dbReference type="NCBIfam" id="NF001638">
    <property type="entry name" value="PRK00418.1"/>
    <property type="match status" value="1"/>
</dbReference>
<dbReference type="PANTHER" id="PTHR36150">
    <property type="entry name" value="DNA GYRASE INHIBITOR YACG"/>
    <property type="match status" value="1"/>
</dbReference>
<dbReference type="PANTHER" id="PTHR36150:SF1">
    <property type="entry name" value="DNA GYRASE INHIBITOR YACG"/>
    <property type="match status" value="1"/>
</dbReference>
<dbReference type="Pfam" id="PF03884">
    <property type="entry name" value="YacG"/>
    <property type="match status" value="1"/>
</dbReference>
<dbReference type="SUPFAM" id="SSF57716">
    <property type="entry name" value="Glucocorticoid receptor-like (DNA-binding domain)"/>
    <property type="match status" value="1"/>
</dbReference>